<keyword id="KW-0052">Apoplast</keyword>
<keyword id="KW-0326">Glycosidase</keyword>
<keyword id="KW-0378">Hydrolase</keyword>
<keyword id="KW-0964">Secreted</keyword>
<keyword id="KW-0732">Signal</keyword>
<reference key="1">
    <citation type="journal article" date="1995" name="Plant Physiol.">
        <title>Cloning of a harvest-induced beta-galactosidase from tips of harvested asparagus spears.</title>
        <authorList>
            <person name="King G.A."/>
            <person name="Davies K.M."/>
        </authorList>
    </citation>
    <scope>NUCLEOTIDE SEQUENCE [MRNA]</scope>
    <source>
        <strain>cv. Limbras 10</strain>
        <tissue>Spear</tissue>
    </source>
</reference>
<dbReference type="EC" id="3.2.1.23"/>
<dbReference type="EMBL" id="X77319">
    <property type="protein sequence ID" value="CAA54525.1"/>
    <property type="molecule type" value="mRNA"/>
</dbReference>
<dbReference type="PIR" id="S41889">
    <property type="entry name" value="S41889"/>
</dbReference>
<dbReference type="SMR" id="P45582"/>
<dbReference type="CAZy" id="GH35">
    <property type="family name" value="Glycoside Hydrolase Family 35"/>
</dbReference>
<dbReference type="GO" id="GO:0048046">
    <property type="term" value="C:apoplast"/>
    <property type="evidence" value="ECO:0007669"/>
    <property type="project" value="UniProtKB-SubCell"/>
</dbReference>
<dbReference type="GO" id="GO:0004565">
    <property type="term" value="F:beta-galactosidase activity"/>
    <property type="evidence" value="ECO:0007669"/>
    <property type="project" value="UniProtKB-EC"/>
</dbReference>
<dbReference type="GO" id="GO:0030246">
    <property type="term" value="F:carbohydrate binding"/>
    <property type="evidence" value="ECO:0007669"/>
    <property type="project" value="InterPro"/>
</dbReference>
<dbReference type="GO" id="GO:0005975">
    <property type="term" value="P:carbohydrate metabolic process"/>
    <property type="evidence" value="ECO:0007669"/>
    <property type="project" value="InterPro"/>
</dbReference>
<dbReference type="CDD" id="cd22842">
    <property type="entry name" value="Gal_Rha_Lectin_BGal"/>
    <property type="match status" value="1"/>
</dbReference>
<dbReference type="FunFam" id="2.60.120.260:FF:000061">
    <property type="entry name" value="Beta-galactosidase"/>
    <property type="match status" value="1"/>
</dbReference>
<dbReference type="FunFam" id="2.60.120.260:FF:000076">
    <property type="entry name" value="Beta-galactosidase"/>
    <property type="match status" value="1"/>
</dbReference>
<dbReference type="FunFam" id="2.60.120.260:FF:000142">
    <property type="entry name" value="Beta-galactosidase"/>
    <property type="match status" value="1"/>
</dbReference>
<dbReference type="FunFam" id="2.60.120.740:FF:000002">
    <property type="entry name" value="Beta-galactosidase"/>
    <property type="match status" value="1"/>
</dbReference>
<dbReference type="FunFam" id="3.20.20.80:FF:000021">
    <property type="entry name" value="Beta-galactosidase"/>
    <property type="match status" value="1"/>
</dbReference>
<dbReference type="Gene3D" id="2.60.120.740">
    <property type="match status" value="1"/>
</dbReference>
<dbReference type="Gene3D" id="2.60.120.260">
    <property type="entry name" value="Galactose-binding domain-like"/>
    <property type="match status" value="3"/>
</dbReference>
<dbReference type="Gene3D" id="3.20.20.80">
    <property type="entry name" value="Glycosidases"/>
    <property type="match status" value="1"/>
</dbReference>
<dbReference type="InterPro" id="IPR048913">
    <property type="entry name" value="BetaGal_gal-bd"/>
</dbReference>
<dbReference type="InterPro" id="IPR008979">
    <property type="entry name" value="Galactose-bd-like_sf"/>
</dbReference>
<dbReference type="InterPro" id="IPR041392">
    <property type="entry name" value="GHD"/>
</dbReference>
<dbReference type="InterPro" id="IPR031330">
    <property type="entry name" value="Gly_Hdrlase_35_cat"/>
</dbReference>
<dbReference type="InterPro" id="IPR019801">
    <property type="entry name" value="Glyco_hydro_35_CS"/>
</dbReference>
<dbReference type="InterPro" id="IPR001944">
    <property type="entry name" value="Glycoside_Hdrlase_35"/>
</dbReference>
<dbReference type="InterPro" id="IPR017853">
    <property type="entry name" value="Glycoside_hydrolase_SF"/>
</dbReference>
<dbReference type="InterPro" id="IPR000922">
    <property type="entry name" value="Lectin_gal-bd_dom"/>
</dbReference>
<dbReference type="InterPro" id="IPR043159">
    <property type="entry name" value="Lectin_gal-bd_sf"/>
</dbReference>
<dbReference type="PANTHER" id="PTHR23421">
    <property type="entry name" value="BETA-GALACTOSIDASE RELATED"/>
    <property type="match status" value="1"/>
</dbReference>
<dbReference type="Pfam" id="PF21467">
    <property type="entry name" value="BetaGal_gal-bd"/>
    <property type="match status" value="2"/>
</dbReference>
<dbReference type="Pfam" id="PF17834">
    <property type="entry name" value="GHD"/>
    <property type="match status" value="1"/>
</dbReference>
<dbReference type="Pfam" id="PF01301">
    <property type="entry name" value="Glyco_hydro_35"/>
    <property type="match status" value="1"/>
</dbReference>
<dbReference type="Pfam" id="PF02140">
    <property type="entry name" value="SUEL_Lectin"/>
    <property type="match status" value="1"/>
</dbReference>
<dbReference type="PRINTS" id="PR00742">
    <property type="entry name" value="GLHYDRLASE35"/>
</dbReference>
<dbReference type="SUPFAM" id="SSF51445">
    <property type="entry name" value="(Trans)glycosidases"/>
    <property type="match status" value="1"/>
</dbReference>
<dbReference type="SUPFAM" id="SSF49785">
    <property type="entry name" value="Galactose-binding domain-like"/>
    <property type="match status" value="2"/>
</dbReference>
<dbReference type="PROSITE" id="PS01182">
    <property type="entry name" value="GLYCOSYL_HYDROL_F35"/>
    <property type="match status" value="1"/>
</dbReference>
<dbReference type="PROSITE" id="PS50228">
    <property type="entry name" value="SUEL_LECTIN"/>
    <property type="match status" value="1"/>
</dbReference>
<comment type="catalytic activity">
    <reaction>
        <text>Hydrolysis of terminal non-reducing beta-D-galactose residues in beta-D-galactosides.</text>
        <dbReference type="EC" id="3.2.1.23"/>
    </reaction>
</comment>
<comment type="subcellular location">
    <subcellularLocation>
        <location evidence="3">Secreted</location>
        <location evidence="3">Extracellular space</location>
        <location evidence="3">Apoplast</location>
    </subcellularLocation>
</comment>
<comment type="similarity">
    <text evidence="3">Belongs to the glycosyl hydrolase 35 family.</text>
</comment>
<evidence type="ECO:0000255" key="1"/>
<evidence type="ECO:0000255" key="2">
    <source>
        <dbReference type="PROSITE-ProRule" id="PRU00260"/>
    </source>
</evidence>
<evidence type="ECO:0000305" key="3"/>
<proteinExistence type="evidence at transcript level"/>
<sequence length="832" mass="92214">MALKLVLMLMVALLAAVWSPPAVTASVTYDHKSVIINGQRRILISGSIHYPRSTPEMWPDLIQKAKDGGLDVIQTYVFWNGHEPSPGQYYFGGRYDLVRFLKLVKQAGLYAHLRIGPYVCAEWNFGGFPVWLKYVPGIHFRTDNGPFKAAMGKFTEKIVSMMKAEGLYETQGGPIILSQIENEYGPVEYYDGAAGKSYTNWAAKMAVGLNTGVPWVMCKQDDAPDPVINTCNGFYCDYFSPNKDNKPKMWTEAWTGWFTGFGGAVPQRPAEDMAFAVARFIQKGGSFINYYMYHGGTNFGRTAGGPFISTSYDYDAPIDEYGLLRQPKWGHLRDLHKAIKLCEPALVSGEPTITSLGQNQESYVYRSKSSCAAFLANFNSRYYATVTFNGMHYNLPPWSVSILPDCKTTVFNTARVGAQTTTMKMQYLGGFSWKAYTEDTDALNDNTFTKDGLVEQLSTTWDRSDYLWYTTYVDIAKNEEFLKTGKYPYLTVMSAGHAVHVFINGQLSGTAYGSLDNPKLTYSGSAKLWAGSNKISILSVSVGLPNVGNHFETWNTGVLGPVTLTGLNEGKRDLSLQKWTYQIGLHGETLSLHSLTGSSNVEWGEASQKQPLTWYKTFFNAPPGNEPLALDMNTMGKGQIWINGQSIGRYWPAYKASGSCGSCDYRGTYNEKKCLSNCGEASQRWYHVPRSWLIPTGNFLVVLEEWGGDPTGISMVKRSVASVCAEVEELQPTMDNWRTKAYGRPKVHLSCDPGQKMSKIKFASFGTPQGTCGSFSEGSCHAHKSYDAFEQEGLMQNCVGQEFCSVNVAPEVFGGDPCPGTMKKLAVEAICE</sequence>
<name>BGAL_ASPOF</name>
<accession>P45582</accession>
<protein>
    <recommendedName>
        <fullName>Beta-galactosidase</fullName>
        <shortName>Lactase</shortName>
        <ecNumber>3.2.1.23</ecNumber>
    </recommendedName>
</protein>
<organism>
    <name type="scientific">Asparagus officinalis</name>
    <name type="common">Garden asparagus</name>
    <dbReference type="NCBI Taxonomy" id="4686"/>
    <lineage>
        <taxon>Eukaryota</taxon>
        <taxon>Viridiplantae</taxon>
        <taxon>Streptophyta</taxon>
        <taxon>Embryophyta</taxon>
        <taxon>Tracheophyta</taxon>
        <taxon>Spermatophyta</taxon>
        <taxon>Magnoliopsida</taxon>
        <taxon>Liliopsida</taxon>
        <taxon>Asparagales</taxon>
        <taxon>Asparagaceae</taxon>
        <taxon>Asparagoideae</taxon>
        <taxon>Asparagus</taxon>
    </lineage>
</organism>
<feature type="signal peptide" evidence="1">
    <location>
        <begin position="1"/>
        <end position="25"/>
    </location>
</feature>
<feature type="chain" id="PRO_0000012193" description="Beta-galactosidase">
    <location>
        <begin position="26"/>
        <end position="832"/>
    </location>
</feature>
<feature type="domain" description="SUEL-type lectin" evidence="2">
    <location>
        <begin position="741"/>
        <end position="832"/>
    </location>
</feature>
<feature type="active site" description="Proton donor" evidence="1">
    <location>
        <position position="183"/>
    </location>
</feature>
<feature type="active site" description="Nucleophile" evidence="1">
    <location>
        <position position="252"/>
    </location>
</feature>